<keyword id="KW-0002">3D-structure</keyword>
<keyword id="KW-0202">Cytokine</keyword>
<keyword id="KW-0903">Direct protein sequencing</keyword>
<keyword id="KW-0325">Glycoprotein</keyword>
<keyword id="KW-0472">Membrane</keyword>
<keyword id="KW-1267">Proteomics identification</keyword>
<keyword id="KW-1185">Reference proteome</keyword>
<keyword id="KW-0964">Secreted</keyword>
<keyword id="KW-0732">Signal</keyword>
<sequence>MTPPERLFLPRVCGTTLHLLLLGLLLVLLPGAQGLPGVGLTPSAAQTARQHPKMHLAHSTLKPAAHLIGDPSKQNSLLWRANTDRAFLQDGFSLSNNSLLVPTSGIYFVYSQVVFSGKAYSPKATSSPLYLAHEVQLFSSQYPFHVPLLSSQKMVYPGLQEPWLHSMYHGAAFQLTQGDQLSTHTDGIPHLVLSPSTVFFGAFAL</sequence>
<reference key="1">
    <citation type="journal article" date="1986" name="Cold Spring Harb. Symp. Quant. Biol.">
        <title>Tandem arrangement of genes coding for tumor necrosis factor (TNF-alpha) and lymphotoxin (TNF-beta) in the human genome.</title>
        <authorList>
            <person name="Nedospasov S.A."/>
            <person name="Shakhov A.N."/>
            <person name="Turetskaya R.L."/>
            <person name="Mett V.A."/>
            <person name="Azizov M.M."/>
            <person name="Georgiev G.P."/>
            <person name="Korobko V.G."/>
            <person name="Dobrynin V.N."/>
            <person name="Filippov S.A."/>
            <person name="Bystrov N.S."/>
            <person name="Boldyreva E.F."/>
            <person name="Chuvpilo S.A."/>
            <person name="Chumakov A.M."/>
            <person name="Shingarova L.N."/>
            <person name="Ovchinnikov Y.A."/>
        </authorList>
    </citation>
    <scope>NUCLEOTIDE SEQUENCE [GENOMIC DNA]</scope>
</reference>
<reference key="2">
    <citation type="journal article" date="1985" name="J. Cell. Biochem.">
        <title>Structure and chromosomal localization of the human lymphotoxin gene.</title>
        <authorList>
            <person name="Nedwin G.E."/>
            <person name="Jarrett-Nedwin J."/>
            <person name="Smith D.H."/>
            <person name="Naylor S.L."/>
            <person name="Sakaguchi A.Y."/>
            <person name="Goeddel D.V."/>
            <person name="Gray P.W."/>
        </authorList>
    </citation>
    <scope>NUCLEOTIDE SEQUENCE [GENOMIC DNA]</scope>
</reference>
<reference key="3">
    <citation type="journal article" date="1986" name="J. Biochem.">
        <title>Cloning and expression of human lymphotoxin mRNA derived from a human T cell hybridoma.</title>
        <authorList>
            <person name="Kobayashi Y."/>
            <person name="Miyamoto D."/>
            <person name="Asada M."/>
            <person name="Obinata M."/>
            <person name="Osawa T."/>
        </authorList>
    </citation>
    <scope>NUCLEOTIDE SEQUENCE [MRNA]</scope>
</reference>
<reference key="4">
    <citation type="journal article" date="1984" name="Nature">
        <title>Cloning and expression of cDNA for human lymphotoxin, a lymphokine with tumour necrosis activity.</title>
        <authorList>
            <person name="Gray P.W."/>
            <person name="Aggarwal B.B."/>
            <person name="Benton C.V."/>
            <person name="Bringman T.S."/>
            <person name="Henzel W.J."/>
            <person name="Jarrett J.A."/>
            <person name="Leung D.W."/>
            <person name="Moffat B."/>
            <person name="Ng P."/>
            <person name="Svedersky L.P."/>
            <person name="Palladino M.A."/>
            <person name="Nedwin G.E."/>
        </authorList>
    </citation>
    <scope>NUCLEOTIDE SEQUENCE [MRNA]</scope>
</reference>
<reference key="5">
    <citation type="journal article" date="1992" name="FEBS Lett.">
        <title>Nucleotide sequence of a cDNA encoding human tumor necrosis factor beta from B lymphoblastoid cell RPMI 1788.</title>
        <authorList>
            <person name="Matsuyama N."/>
            <person name="Okawa N."/>
            <person name="Tsukii Y."/>
            <person name="Endo T."/>
            <person name="Kaji A."/>
        </authorList>
    </citation>
    <scope>NUCLEOTIDE SEQUENCE [MRNA]</scope>
</reference>
<reference key="6">
    <citation type="journal article" date="1993" name="Nat. Genet.">
        <title>Dense Alu clustering and a potential new member of the NF kappa B family within a 90 kilobase HLA class III segment.</title>
        <authorList>
            <person name="Iris F.J.M."/>
            <person name="Bougueleret L."/>
            <person name="Prieur S."/>
            <person name="Caterina D."/>
            <person name="Primas G."/>
            <person name="Perrot V."/>
            <person name="Jurka J."/>
            <person name="Rodriguez-Tome P."/>
            <person name="Claverie J.-M."/>
            <person name="Dausset J."/>
            <person name="Cohen D."/>
        </authorList>
    </citation>
    <scope>NUCLEOTIDE SEQUENCE [GENOMIC DNA]</scope>
</reference>
<reference key="7">
    <citation type="journal article" date="1999" name="J. Immunol.">
        <title>A new member of the Ig superfamily and a V-ATPase G subunit are among the predicted products of novel genes close to the TNF locus in the human MHC.</title>
        <authorList>
            <person name="Neville M.J."/>
            <person name="Campbell R.D."/>
        </authorList>
    </citation>
    <scope>NUCLEOTIDE SEQUENCE [GENOMIC DNA]</scope>
</reference>
<reference key="8">
    <citation type="journal article" date="2003" name="Genome Res.">
        <title>Analysis of the gene-dense major histocompatibility complex class III region and its comparison to mouse.</title>
        <authorList>
            <person name="Xie T."/>
            <person name="Rowen L."/>
            <person name="Aguado B."/>
            <person name="Ahearn M.E."/>
            <person name="Madan A."/>
            <person name="Qin S."/>
            <person name="Campbell R.D."/>
            <person name="Hood L."/>
        </authorList>
    </citation>
    <scope>NUCLEOTIDE SEQUENCE [LARGE SCALE GENOMIC DNA]</scope>
</reference>
<reference key="9">
    <citation type="submission" date="1999-09" db="EMBL/GenBank/DDBJ databases">
        <title>Homo sapiens 2,229,817bp genomic DNA of 6p21.3 HLA class I region.</title>
        <authorList>
            <person name="Shiina S."/>
            <person name="Tamiya G."/>
            <person name="Oka A."/>
            <person name="Inoko H."/>
        </authorList>
    </citation>
    <scope>NUCLEOTIDE SEQUENCE [LARGE SCALE GENOMIC DNA]</scope>
</reference>
<reference key="10">
    <citation type="submission" date="2001-12" db="EMBL/GenBank/DDBJ databases">
        <authorList>
            <consortium name="SeattleSNPs variation discovery resource"/>
        </authorList>
    </citation>
    <scope>NUCLEOTIDE SEQUENCE [GENOMIC DNA]</scope>
    <scope>VARIANTS ARG-13; PRO-51 AND ASN-60</scope>
</reference>
<reference key="11">
    <citation type="submission" date="2003-01" db="EMBL/GenBank/DDBJ databases">
        <authorList>
            <consortium name="NIEHS SNPs program"/>
        </authorList>
    </citation>
    <scope>NUCLEOTIDE SEQUENCE [GENOMIC DNA]</scope>
    <scope>VARIANTS ARG-13; PRO-51 AND ASN-60</scope>
</reference>
<reference key="12">
    <citation type="journal article" date="2004" name="Genome Res.">
        <title>The status, quality, and expansion of the NIH full-length cDNA project: the Mammalian Gene Collection (MGC).</title>
        <authorList>
            <consortium name="The MGC Project Team"/>
        </authorList>
    </citation>
    <scope>NUCLEOTIDE SEQUENCE [LARGE SCALE MRNA]</scope>
    <scope>VARIANT ARG-13</scope>
    <source>
        <tissue>Lymph</tissue>
    </source>
</reference>
<reference key="13">
    <citation type="journal article" date="1992" name="FEBS Lett.">
        <title>Natural human tumor necrosis factor beta (lymphotoxin). Variable O-glycosylation at Thr7, proteolytic processing, and allelic variation.</title>
        <authorList>
            <person name="Voigt C.G."/>
            <person name="Maurer-Fogy I."/>
            <person name="Adolf G.R."/>
        </authorList>
    </citation>
    <scope>PARTIAL PROTEIN SEQUENCE</scope>
    <scope>GLYCOSYLATION AT THR-41 AND ASN-96</scope>
    <scope>VARIANT ASN-60</scope>
</reference>
<reference key="14">
    <citation type="journal article" date="1998" name="Immunity">
        <title>LIGHT, a new member of the TNF superfamily, and lymphotoxin alpha are ligands for herpesvirus entry mediator.</title>
        <authorList>
            <person name="Mauri D.N."/>
            <person name="Ebner R."/>
            <person name="Montgomery R.I."/>
            <person name="Kochel K.D."/>
            <person name="Cheung T.C."/>
            <person name="Yu G.-L."/>
            <person name="Ruben S."/>
            <person name="Murphy M."/>
            <person name="Eisenberg R.J."/>
            <person name="Cohen G.H."/>
            <person name="Spear P.G."/>
            <person name="Ware C.F."/>
        </authorList>
    </citation>
    <scope>FUNCTION</scope>
    <scope>SUBUNIT</scope>
    <scope>INTERACTION WITH TNFRSF14</scope>
</reference>
<reference key="15">
    <citation type="journal article" date="1992" name="J. Biol. Chem.">
        <title>The structure of human lymphotoxin (tumor necrosis factor-beta) at 1.9-A resolution.</title>
        <authorList>
            <person name="Eck M.J."/>
            <person name="Ultsch M."/>
            <person name="Rinderknecht E."/>
            <person name="de Vos A.M."/>
            <person name="Sprang S.R."/>
        </authorList>
    </citation>
    <scope>X-RAY CRYSTALLOGRAPHY (1.9 ANGSTROMS)</scope>
</reference>
<reference key="16">
    <citation type="journal article" date="1993" name="Cell">
        <title>Crystal structure of the soluble human 55 kd TNF receptor-human TNF beta complex: implications for TNF receptor activation.</title>
        <authorList>
            <person name="Banner D.W."/>
            <person name="D'Arcy A."/>
            <person name="Janes W."/>
            <person name="Gentz R."/>
            <person name="Schoenfeld H.-J."/>
            <person name="Broger C."/>
            <person name="Loetscher H."/>
            <person name="Lesslauer W."/>
        </authorList>
    </citation>
    <scope>X-RAY CRYSTALLOGRAPHY (2.85 ANGSTROMS) OF 61-205 OF COMPLEX WITH TNFR1</scope>
</reference>
<reference evidence="12 13" key="17">
    <citation type="journal article" date="2013" name="Proc. Natl. Acad. Sci. U.S.A.">
        <title>Dimerization of LTbetaR by LTalpha1beta2 is necessary and sufficient for signal transduction.</title>
        <authorList>
            <person name="Sudhamsu J."/>
            <person name="Yin J."/>
            <person name="Chiang E.Y."/>
            <person name="Starovasnik M.A."/>
            <person name="Grogan J.L."/>
            <person name="Hymowitz S.G."/>
        </authorList>
    </citation>
    <scope>STRUCTURE BY ELECTRON MICROSCOPY (3.20 ANGSTROMS) OF 62-205 IN COMPLEX WITH LTB; LTBR AND ANTI-LTA FAB</scope>
    <scope>FUNCTION</scope>
    <scope>SUBUNIT</scope>
    <scope>MUTAGENESIS OF TYR-142</scope>
</reference>
<reference key="18">
    <citation type="journal article" date="1991" name="J. Exp. Med.">
        <title>Polymorphic structure of the tumor necrosis factor (TNF) locus: an NcoI polymorphism in the first intron of the human TNF-beta gene correlates with a variant amino acid in position 26 and a reduced level of TNF-beta production.</title>
        <authorList>
            <person name="Messer G."/>
            <person name="Spengler U."/>
            <person name="Jung M.C."/>
            <person name="Honold G."/>
            <person name="Bloemer K."/>
            <person name="Pape G.R."/>
            <person name="Riethmueller G."/>
            <person name="Weiss E.H."/>
        </authorList>
    </citation>
    <scope>VARIANT ASN-60</scope>
</reference>
<reference key="19">
    <citation type="journal article" date="1991" name="Immunogenetics">
        <title>Haplotypic polymorphisms of the TNFB gene.</title>
        <authorList>
            <person name="Abraham L.J."/>
            <person name="Du D.C."/>
            <person name="Zahedi K."/>
            <person name="Dawkins R.L."/>
            <person name="Whitehead A.S."/>
        </authorList>
    </citation>
    <scope>VARIANT PRO-125</scope>
</reference>
<reference key="20">
    <citation type="journal article" date="2003" name="Arthritis Rheum.">
        <title>Cytokine gene polymorphisms: association with psoriatic arthritis susceptibility and severity.</title>
        <authorList>
            <person name="Balding J."/>
            <person name="Kane D."/>
            <person name="Livingstone W."/>
            <person name="Mynett-Johnson L."/>
            <person name="Bresnihan B."/>
            <person name="Smith O."/>
            <person name="FitzGerald O."/>
        </authorList>
    </citation>
    <scope>INVOLVEMENT IN PSORIATIC ARTHRITIS SUSCEPTIBILITY</scope>
</reference>
<reference key="21">
    <citation type="journal article" date="2007" name="Nat. Genet.">
        <title>Stepwise replication identifies a low-producing lymphotoxin-alpha allele as a major risk factor for early-onset leprosy.</title>
        <authorList>
            <person name="Alcaies A."/>
            <person name="Alter A."/>
            <person name="Antoni G."/>
            <person name="Orlova M."/>
            <person name="Nguyen V.T."/>
            <person name="Singh M."/>
            <person name="Vanderborght P.R."/>
            <person name="Katoch K."/>
            <person name="Mira M.T."/>
            <person name="Vu H.T."/>
            <person name="Ngyuen T.H."/>
            <person name="Nguyen N.B."/>
            <person name="Moraes M."/>
            <person name="Mehra N."/>
            <person name="Schurr E."/>
            <person name="Abel L."/>
        </authorList>
    </citation>
    <scope>INVOLVEMENT IN LPRS4</scope>
</reference>
<protein>
    <recommendedName>
        <fullName>Lymphotoxin-alpha</fullName>
        <shortName>LT-alpha</shortName>
    </recommendedName>
    <alternativeName>
        <fullName>TNF-beta</fullName>
    </alternativeName>
    <alternativeName>
        <fullName>Tumor necrosis factor ligand superfamily member 1</fullName>
    </alternativeName>
</protein>
<name>TNFB_HUMAN</name>
<organism>
    <name type="scientific">Homo sapiens</name>
    <name type="common">Human</name>
    <dbReference type="NCBI Taxonomy" id="9606"/>
    <lineage>
        <taxon>Eukaryota</taxon>
        <taxon>Metazoa</taxon>
        <taxon>Chordata</taxon>
        <taxon>Craniata</taxon>
        <taxon>Vertebrata</taxon>
        <taxon>Euteleostomi</taxon>
        <taxon>Mammalia</taxon>
        <taxon>Eutheria</taxon>
        <taxon>Euarchontoglires</taxon>
        <taxon>Primates</taxon>
        <taxon>Haplorrhini</taxon>
        <taxon>Catarrhini</taxon>
        <taxon>Hominidae</taxon>
        <taxon>Homo</taxon>
    </lineage>
</organism>
<gene>
    <name type="primary">LTA</name>
    <name type="synonym">TNFB</name>
    <name type="synonym">TNFSF1</name>
</gene>
<feature type="signal peptide">
    <location>
        <begin position="1"/>
        <end position="34"/>
    </location>
</feature>
<feature type="chain" id="PRO_0000034463" description="Lymphotoxin-alpha">
    <location>
        <begin position="35"/>
        <end position="205"/>
    </location>
</feature>
<feature type="domain" description="THD" evidence="1">
    <location>
        <begin position="63"/>
        <end position="205"/>
    </location>
</feature>
<feature type="glycosylation site" description="O-linked (GalNAc...) threonine; partial" evidence="3">
    <location>
        <position position="41"/>
    </location>
</feature>
<feature type="glycosylation site" id="CAR_000048" description="N-linked (GlcNAc...) asparagine" evidence="3">
    <location>
        <position position="96"/>
    </location>
</feature>
<feature type="sequence variant" id="VAR_013023" description="In dbSNP:rs2229094." evidence="4 9 10">
    <original>C</original>
    <variation>R</variation>
    <location>
        <position position="13"/>
    </location>
</feature>
<feature type="sequence variant" id="VAR_013024" description="In dbSNP:rs2229092." evidence="9 10">
    <original>H</original>
    <variation>P</variation>
    <location>
        <position position="51"/>
    </location>
</feature>
<feature type="sequence variant" id="VAR_007511" description="In allele TNFB*2; dbSNP:rs1041981." evidence="3 5 9 10">
    <original>T</original>
    <variation>N</variation>
    <location>
        <position position="60"/>
    </location>
</feature>
<feature type="sequence variant" id="VAR_007512" description="In allele 8.1." evidence="6">
    <original>T</original>
    <variation>P</variation>
    <location>
        <position position="125"/>
    </location>
</feature>
<feature type="mutagenesis site" description="Reduces binding of LTA(1)-LTB(2) to LTBR and LTBR-mediated NF-kappa-B signaling activation. Reduces binding of LTA(1)-LTB(2) to LTBR and abolishes LTBR-mediated NF-kappa-B signaling activation; when associated with 'E-108'; 'R-109' and 'E-142' in LTB (subunit 1). Abolishes binding of LTA(1)-LTB(2) to LTBR and abolishes LTBR-mediated NF-kappa-B signaling activation; when associated with 'E-108'; 'R-109'; 'E-142' and 'A-170' in LTB (subunit 1), and 'E-108'; 'R-109' and 'E-142' in LTB (subunit 2)." evidence="7">
    <original>Y</original>
    <variation>A</variation>
    <location>
        <position position="142"/>
    </location>
</feature>
<feature type="strand" evidence="14">
    <location>
        <begin position="64"/>
        <end position="69"/>
    </location>
</feature>
<feature type="turn" evidence="15">
    <location>
        <begin position="71"/>
        <end position="73"/>
    </location>
</feature>
<feature type="strand" evidence="14">
    <location>
        <begin position="74"/>
        <end position="76"/>
    </location>
</feature>
<feature type="strand" evidence="14">
    <location>
        <begin position="87"/>
        <end position="89"/>
    </location>
</feature>
<feature type="strand" evidence="14">
    <location>
        <begin position="93"/>
        <end position="95"/>
    </location>
</feature>
<feature type="strand" evidence="14">
    <location>
        <begin position="98"/>
        <end position="100"/>
    </location>
</feature>
<feature type="strand" evidence="14">
    <location>
        <begin position="103"/>
        <end position="117"/>
    </location>
</feature>
<feature type="helix" evidence="14">
    <location>
        <begin position="122"/>
        <end position="125"/>
    </location>
</feature>
<feature type="strand" evidence="14">
    <location>
        <begin position="129"/>
        <end position="138"/>
    </location>
</feature>
<feature type="strand" evidence="14">
    <location>
        <begin position="142"/>
        <end position="144"/>
    </location>
</feature>
<feature type="strand" evidence="14">
    <location>
        <begin position="146"/>
        <end position="155"/>
    </location>
</feature>
<feature type="strand" evidence="14">
    <location>
        <begin position="163"/>
        <end position="175"/>
    </location>
</feature>
<feature type="strand" evidence="14">
    <location>
        <begin position="180"/>
        <end position="186"/>
    </location>
</feature>
<feature type="helix" evidence="14">
    <location>
        <begin position="188"/>
        <end position="190"/>
    </location>
</feature>
<feature type="turn" evidence="14">
    <location>
        <begin position="195"/>
        <end position="197"/>
    </location>
</feature>
<feature type="strand" evidence="14">
    <location>
        <begin position="198"/>
        <end position="204"/>
    </location>
</feature>
<proteinExistence type="evidence at protein level"/>
<dbReference type="EMBL" id="X01393">
    <property type="protein sequence ID" value="CAA25649.1"/>
    <property type="molecule type" value="mRNA"/>
</dbReference>
<dbReference type="EMBL" id="X02911">
    <property type="protein sequence ID" value="CAA26670.1"/>
    <property type="molecule type" value="Genomic_DNA"/>
</dbReference>
<dbReference type="EMBL" id="D00102">
    <property type="protein sequence ID" value="BAA00064.1"/>
    <property type="molecule type" value="mRNA"/>
</dbReference>
<dbReference type="EMBL" id="M16441">
    <property type="protein sequence ID" value="AAA61199.1"/>
    <property type="molecule type" value="Genomic_DNA"/>
</dbReference>
<dbReference type="EMBL" id="D12614">
    <property type="protein sequence ID" value="BAA02139.1"/>
    <property type="molecule type" value="mRNA"/>
</dbReference>
<dbReference type="EMBL" id="M55913">
    <property type="protein sequence ID" value="AAB59455.1"/>
    <property type="molecule type" value="Genomic_DNA"/>
</dbReference>
<dbReference type="EMBL" id="Z15026">
    <property type="protein sequence ID" value="CAA78746.1"/>
    <property type="molecule type" value="Genomic_DNA"/>
</dbReference>
<dbReference type="EMBL" id="Y14768">
    <property type="protein sequence ID" value="CAA75071.1"/>
    <property type="molecule type" value="Genomic_DNA"/>
</dbReference>
<dbReference type="EMBL" id="AF129756">
    <property type="protein sequence ID" value="AAD18092.1"/>
    <property type="molecule type" value="Genomic_DNA"/>
</dbReference>
<dbReference type="EMBL" id="BA000025">
    <property type="protein sequence ID" value="BAB63397.1"/>
    <property type="molecule type" value="Genomic_DNA"/>
</dbReference>
<dbReference type="EMBL" id="AY070490">
    <property type="protein sequence ID" value="AAL49956.1"/>
    <property type="molecule type" value="Genomic_DNA"/>
</dbReference>
<dbReference type="EMBL" id="AY216498">
    <property type="protein sequence ID" value="AAO21135.1"/>
    <property type="molecule type" value="Genomic_DNA"/>
</dbReference>
<dbReference type="EMBL" id="BC034729">
    <property type="protein sequence ID" value="AAH34729.1"/>
    <property type="molecule type" value="mRNA"/>
</dbReference>
<dbReference type="CCDS" id="CCDS4701.1"/>
<dbReference type="PIR" id="A92755">
    <property type="entry name" value="QWHUX"/>
</dbReference>
<dbReference type="RefSeq" id="NP_000586.2">
    <property type="nucleotide sequence ID" value="NM_000595.3"/>
</dbReference>
<dbReference type="RefSeq" id="NP_001153212.1">
    <property type="nucleotide sequence ID" value="NM_001159740.2"/>
</dbReference>
<dbReference type="RefSeq" id="XP_011512917.1">
    <property type="nucleotide sequence ID" value="XM_011514615.2"/>
</dbReference>
<dbReference type="RefSeq" id="XP_011512918.1">
    <property type="nucleotide sequence ID" value="XM_011514616.2"/>
</dbReference>
<dbReference type="RefSeq" id="XP_011512919.1">
    <property type="nucleotide sequence ID" value="XM_011514617.2"/>
</dbReference>
<dbReference type="RefSeq" id="XP_011512920.1">
    <property type="nucleotide sequence ID" value="XM_011514618.1"/>
</dbReference>
<dbReference type="RefSeq" id="XP_047274729.1">
    <property type="nucleotide sequence ID" value="XM_047418773.1"/>
</dbReference>
<dbReference type="RefSeq" id="XP_054186579.1">
    <property type="nucleotide sequence ID" value="XM_054330604.1"/>
</dbReference>
<dbReference type="RefSeq" id="XP_054186580.1">
    <property type="nucleotide sequence ID" value="XM_054330605.1"/>
</dbReference>
<dbReference type="RefSeq" id="XP_054187320.1">
    <property type="nucleotide sequence ID" value="XM_054331345.1"/>
</dbReference>
<dbReference type="RefSeq" id="XP_054187321.1">
    <property type="nucleotide sequence ID" value="XM_054331346.1"/>
</dbReference>
<dbReference type="PDB" id="1TNR">
    <property type="method" value="X-ray"/>
    <property type="resolution" value="2.85 A"/>
    <property type="chains" value="A=62-205"/>
</dbReference>
<dbReference type="PDB" id="4MXV">
    <property type="method" value="X-ray"/>
    <property type="resolution" value="3.20 A"/>
    <property type="chains" value="A/B/D=62-205"/>
</dbReference>
<dbReference type="PDB" id="4MXW">
    <property type="method" value="X-ray"/>
    <property type="resolution" value="3.60 A"/>
    <property type="chains" value="A/X=62-205"/>
</dbReference>
<dbReference type="PDBsum" id="1TNR"/>
<dbReference type="PDBsum" id="4MXV"/>
<dbReference type="PDBsum" id="4MXW"/>
<dbReference type="SMR" id="P01374"/>
<dbReference type="BioGRID" id="110227">
    <property type="interactions" value="26"/>
</dbReference>
<dbReference type="ComplexPortal" id="CPX-8945">
    <property type="entry name" value="Lymphotoxin-alpha-TNFRSF1A receptor complex"/>
</dbReference>
<dbReference type="ComplexPortal" id="CPX-8947">
    <property type="entry name" value="Lymphotoxin-alpha-beta-LTBR receptor complex"/>
</dbReference>
<dbReference type="ComplexPortal" id="CPX-9221">
    <property type="entry name" value="Lymphotoxin-alpha-TNFRSF1B receptor complex"/>
</dbReference>
<dbReference type="ComplexPortal" id="CPX-9222">
    <property type="entry name" value="Lymphotoxin-alpha-TNFRSF14 receptor complex"/>
</dbReference>
<dbReference type="CORUM" id="P01374"/>
<dbReference type="DIP" id="DIP-2910N"/>
<dbReference type="FunCoup" id="P01374">
    <property type="interactions" value="782"/>
</dbReference>
<dbReference type="IntAct" id="P01374">
    <property type="interactions" value="20"/>
</dbReference>
<dbReference type="MINT" id="P01374"/>
<dbReference type="STRING" id="9606.ENSP00000403495"/>
<dbReference type="BindingDB" id="P01374"/>
<dbReference type="ChEMBL" id="CHEMBL2059"/>
<dbReference type="DrugBank" id="DB00005">
    <property type="generic name" value="Etanercept"/>
</dbReference>
<dbReference type="GlyConnect" id="354">
    <property type="glycosylation" value="6 N-Linked glycans (1 site)"/>
</dbReference>
<dbReference type="GlyCosmos" id="P01374">
    <property type="glycosylation" value="2 sites, 10 glycans"/>
</dbReference>
<dbReference type="GlyGen" id="P01374">
    <property type="glycosylation" value="2 sites, 10 N-linked glycans (1 site)"/>
</dbReference>
<dbReference type="iPTMnet" id="P01374"/>
<dbReference type="MetOSite" id="P01374"/>
<dbReference type="BioMuta" id="LTA"/>
<dbReference type="DMDM" id="135940"/>
<dbReference type="MassIVE" id="P01374"/>
<dbReference type="PaxDb" id="9606-ENSP00000403495"/>
<dbReference type="PeptideAtlas" id="P01374"/>
<dbReference type="ABCD" id="P01374">
    <property type="antibodies" value="18 sequenced antibodies"/>
</dbReference>
<dbReference type="Antibodypedia" id="27173">
    <property type="antibodies" value="872 antibodies from 43 providers"/>
</dbReference>
<dbReference type="DNASU" id="4049"/>
<dbReference type="Ensembl" id="ENST00000412851.6">
    <property type="protein sequence ID" value="ENSP00000412555.2"/>
    <property type="gene ID" value="ENSG00000230279.8"/>
</dbReference>
<dbReference type="Ensembl" id="ENST00000418386.3">
    <property type="protein sequence ID" value="ENSP00000413450.2"/>
    <property type="gene ID" value="ENSG00000226979.9"/>
</dbReference>
<dbReference type="Ensembl" id="ENST00000426845.1">
    <property type="protein sequence ID" value="ENSP00000402413.1"/>
    <property type="gene ID" value="ENSG00000230279.8"/>
</dbReference>
<dbReference type="Ensembl" id="ENST00000436519.5">
    <property type="protein sequence ID" value="ENSP00000395976.1"/>
    <property type="gene ID" value="ENSG00000231408.8"/>
</dbReference>
<dbReference type="Ensembl" id="ENST00000454550.2">
    <property type="protein sequence ID" value="ENSP00000416509.2"/>
    <property type="gene ID" value="ENSG00000231408.8"/>
</dbReference>
<dbReference type="Ensembl" id="ENST00000454783.5">
    <property type="protein sequence ID" value="ENSP00000403495.1"/>
    <property type="gene ID" value="ENSG00000226979.9"/>
</dbReference>
<dbReference type="GeneID" id="4049"/>
<dbReference type="KEGG" id="hsa:4049"/>
<dbReference type="MANE-Select" id="ENST00000418386.3">
    <property type="protein sequence ID" value="ENSP00000413450.2"/>
    <property type="RefSeq nucleotide sequence ID" value="NM_000595.4"/>
    <property type="RefSeq protein sequence ID" value="NP_000586.2"/>
</dbReference>
<dbReference type="AGR" id="HGNC:6709"/>
<dbReference type="CTD" id="4049"/>
<dbReference type="DisGeNET" id="4049"/>
<dbReference type="GeneCards" id="LTA"/>
<dbReference type="HGNC" id="HGNC:6709">
    <property type="gene designation" value="LTA"/>
</dbReference>
<dbReference type="HPA" id="ENSG00000226979">
    <property type="expression patterns" value="Group enriched (intestine, lymphoid tissue, testis)"/>
</dbReference>
<dbReference type="MalaCards" id="LTA"/>
<dbReference type="MIM" id="153440">
    <property type="type" value="gene"/>
</dbReference>
<dbReference type="MIM" id="607507">
    <property type="type" value="phenotype"/>
</dbReference>
<dbReference type="MIM" id="610988">
    <property type="type" value="phenotype"/>
</dbReference>
<dbReference type="neXtProt" id="NX_P01374"/>
<dbReference type="OpenTargets" id="ENSG00000226979"/>
<dbReference type="PharmGKB" id="PA30474"/>
<dbReference type="VEuPathDB" id="HostDB:ENSG00000226979"/>
<dbReference type="eggNOG" id="ENOG502S4K8">
    <property type="taxonomic scope" value="Eukaryota"/>
</dbReference>
<dbReference type="GeneTree" id="ENSGT01060000248544"/>
<dbReference type="HOGENOM" id="CLU_070352_4_0_1"/>
<dbReference type="InParanoid" id="P01374"/>
<dbReference type="OMA" id="RSACQNV"/>
<dbReference type="OrthoDB" id="9940698at2759"/>
<dbReference type="PAN-GO" id="P01374">
    <property type="GO annotations" value="0 GO annotations based on evolutionary models"/>
</dbReference>
<dbReference type="PhylomeDB" id="P01374"/>
<dbReference type="TreeFam" id="TF332169"/>
<dbReference type="PathwayCommons" id="P01374"/>
<dbReference type="Reactome" id="R-HSA-5668541">
    <property type="pathway name" value="TNFR2 non-canonical NF-kB pathway"/>
</dbReference>
<dbReference type="Reactome" id="R-HSA-5669034">
    <property type="pathway name" value="TNFs bind their physiological receptors"/>
</dbReference>
<dbReference type="Reactome" id="R-HSA-5676594">
    <property type="pathway name" value="TNF receptor superfamily (TNFSF) members mediating non-canonical NF-kB pathway"/>
</dbReference>
<dbReference type="SignaLink" id="P01374"/>
<dbReference type="SIGNOR" id="P01374"/>
<dbReference type="BioGRID-ORCS" id="4049">
    <property type="hits" value="12 hits in 1147 CRISPR screens"/>
</dbReference>
<dbReference type="EvolutionaryTrace" id="P01374"/>
<dbReference type="GeneWiki" id="Lymphotoxin_alpha"/>
<dbReference type="GenomeRNAi" id="4049"/>
<dbReference type="Pharos" id="P01374">
    <property type="development level" value="Tbio"/>
</dbReference>
<dbReference type="PRO" id="PR:P01374"/>
<dbReference type="Proteomes" id="UP000005640">
    <property type="component" value="Chromosome 6"/>
</dbReference>
<dbReference type="RNAct" id="P01374">
    <property type="molecule type" value="protein"/>
</dbReference>
<dbReference type="Bgee" id="ENSG00000226979">
    <property type="expression patterns" value="Expressed in male germ line stem cell (sensu Vertebrata) in testis and 90 other cell types or tissues"/>
</dbReference>
<dbReference type="ExpressionAtlas" id="P01374">
    <property type="expression patterns" value="baseline and differential"/>
</dbReference>
<dbReference type="GO" id="GO:0005615">
    <property type="term" value="C:extracellular space"/>
    <property type="evidence" value="ECO:0000318"/>
    <property type="project" value="GO_Central"/>
</dbReference>
<dbReference type="GO" id="GO:0005886">
    <property type="term" value="C:plasma membrane"/>
    <property type="evidence" value="ECO:0000304"/>
    <property type="project" value="Reactome"/>
</dbReference>
<dbReference type="GO" id="GO:0005125">
    <property type="term" value="F:cytokine activity"/>
    <property type="evidence" value="ECO:0000318"/>
    <property type="project" value="GO_Central"/>
</dbReference>
<dbReference type="GO" id="GO:0005102">
    <property type="term" value="F:signaling receptor binding"/>
    <property type="evidence" value="ECO:0000304"/>
    <property type="project" value="ProtInc"/>
</dbReference>
<dbReference type="GO" id="GO:0005164">
    <property type="term" value="F:tumor necrosis factor receptor binding"/>
    <property type="evidence" value="ECO:0007669"/>
    <property type="project" value="InterPro"/>
</dbReference>
<dbReference type="GO" id="GO:0006915">
    <property type="term" value="P:apoptotic process"/>
    <property type="evidence" value="ECO:0000304"/>
    <property type="project" value="ProtInc"/>
</dbReference>
<dbReference type="GO" id="GO:0007166">
    <property type="term" value="P:cell surface receptor signaling pathway"/>
    <property type="evidence" value="ECO:0000318"/>
    <property type="project" value="GO_Central"/>
</dbReference>
<dbReference type="GO" id="GO:0007267">
    <property type="term" value="P:cell-cell signaling"/>
    <property type="evidence" value="ECO:0000304"/>
    <property type="project" value="ProtInc"/>
</dbReference>
<dbReference type="GO" id="GO:0050830">
    <property type="term" value="P:defense response to Gram-positive bacterium"/>
    <property type="evidence" value="ECO:0007669"/>
    <property type="project" value="Ensembl"/>
</dbReference>
<dbReference type="GO" id="GO:0006959">
    <property type="term" value="P:humoral immune response"/>
    <property type="evidence" value="ECO:0007669"/>
    <property type="project" value="Ensembl"/>
</dbReference>
<dbReference type="GO" id="GO:0006955">
    <property type="term" value="P:immune response"/>
    <property type="evidence" value="ECO:0000318"/>
    <property type="project" value="GO_Central"/>
</dbReference>
<dbReference type="GO" id="GO:0048535">
    <property type="term" value="P:lymph node development"/>
    <property type="evidence" value="ECO:0007669"/>
    <property type="project" value="Ensembl"/>
</dbReference>
<dbReference type="GO" id="GO:0048147">
    <property type="term" value="P:negative regulation of fibroblast proliferation"/>
    <property type="evidence" value="ECO:0007669"/>
    <property type="project" value="Ensembl"/>
</dbReference>
<dbReference type="GO" id="GO:0043123">
    <property type="term" value="P:positive regulation of canonical NF-kappaB signal transduction"/>
    <property type="evidence" value="ECO:0000318"/>
    <property type="project" value="GO_Central"/>
</dbReference>
<dbReference type="GO" id="GO:0002876">
    <property type="term" value="P:positive regulation of chronic inflammatory response to antigenic stimulus"/>
    <property type="evidence" value="ECO:0007669"/>
    <property type="project" value="Ensembl"/>
</dbReference>
<dbReference type="GO" id="GO:2001238">
    <property type="term" value="P:positive regulation of extrinsic apoptotic signaling pathway"/>
    <property type="evidence" value="ECO:0000318"/>
    <property type="project" value="GO_Central"/>
</dbReference>
<dbReference type="GO" id="GO:0060252">
    <property type="term" value="P:positive regulation of glial cell proliferation"/>
    <property type="evidence" value="ECO:0007669"/>
    <property type="project" value="Ensembl"/>
</dbReference>
<dbReference type="GO" id="GO:0002925">
    <property type="term" value="P:positive regulation of humoral immune response mediated by circulating immunoglobulin"/>
    <property type="evidence" value="ECO:0007669"/>
    <property type="project" value="Ensembl"/>
</dbReference>
<dbReference type="GO" id="GO:0032729">
    <property type="term" value="P:positive regulation of type II interferon production"/>
    <property type="evidence" value="ECO:0007669"/>
    <property type="project" value="Ensembl"/>
</dbReference>
<dbReference type="GO" id="GO:0001666">
    <property type="term" value="P:response to hypoxia"/>
    <property type="evidence" value="ECO:0007669"/>
    <property type="project" value="Ensembl"/>
</dbReference>
<dbReference type="GO" id="GO:0032496">
    <property type="term" value="P:response to lipopolysaccharide"/>
    <property type="evidence" value="ECO:0007669"/>
    <property type="project" value="Ensembl"/>
</dbReference>
<dbReference type="GO" id="GO:0007584">
    <property type="term" value="P:response to nutrient"/>
    <property type="evidence" value="ECO:0007669"/>
    <property type="project" value="Ensembl"/>
</dbReference>
<dbReference type="GO" id="GO:0009410">
    <property type="term" value="P:response to xenobiotic stimulus"/>
    <property type="evidence" value="ECO:0007669"/>
    <property type="project" value="Ensembl"/>
</dbReference>
<dbReference type="GO" id="GO:0007165">
    <property type="term" value="P:signal transduction"/>
    <property type="evidence" value="ECO:0000304"/>
    <property type="project" value="ProtInc"/>
</dbReference>
<dbReference type="CDD" id="cd00184">
    <property type="entry name" value="TNF"/>
    <property type="match status" value="1"/>
</dbReference>
<dbReference type="FunFam" id="2.60.120.40:FF:000016">
    <property type="entry name" value="Tumor necrosis factor"/>
    <property type="match status" value="1"/>
</dbReference>
<dbReference type="Gene3D" id="2.60.120.40">
    <property type="match status" value="1"/>
</dbReference>
<dbReference type="InterPro" id="IPR006053">
    <property type="entry name" value="TNF"/>
</dbReference>
<dbReference type="InterPro" id="IPR002960">
    <property type="entry name" value="TNF_beta"/>
</dbReference>
<dbReference type="InterPro" id="IPR021184">
    <property type="entry name" value="TNF_CS"/>
</dbReference>
<dbReference type="InterPro" id="IPR006052">
    <property type="entry name" value="TNF_dom"/>
</dbReference>
<dbReference type="InterPro" id="IPR008983">
    <property type="entry name" value="Tumour_necrosis_fac-like_dom"/>
</dbReference>
<dbReference type="PANTHER" id="PTHR11471:SF31">
    <property type="entry name" value="LYMPHOTOXIN-ALPHA"/>
    <property type="match status" value="1"/>
</dbReference>
<dbReference type="PANTHER" id="PTHR11471">
    <property type="entry name" value="TUMOR NECROSIS FACTOR FAMILY MEMBER"/>
    <property type="match status" value="1"/>
</dbReference>
<dbReference type="Pfam" id="PF00229">
    <property type="entry name" value="TNF"/>
    <property type="match status" value="1"/>
</dbReference>
<dbReference type="PRINTS" id="PR01234">
    <property type="entry name" value="TNECROSISFCT"/>
</dbReference>
<dbReference type="PRINTS" id="PR01236">
    <property type="entry name" value="TNFBETA"/>
</dbReference>
<dbReference type="SMART" id="SM00207">
    <property type="entry name" value="TNF"/>
    <property type="match status" value="1"/>
</dbReference>
<dbReference type="SUPFAM" id="SSF49842">
    <property type="entry name" value="TNF-like"/>
    <property type="match status" value="1"/>
</dbReference>
<dbReference type="PROSITE" id="PS00251">
    <property type="entry name" value="THD_1"/>
    <property type="match status" value="1"/>
</dbReference>
<dbReference type="PROSITE" id="PS50049">
    <property type="entry name" value="THD_2"/>
    <property type="match status" value="1"/>
</dbReference>
<evidence type="ECO:0000255" key="1">
    <source>
        <dbReference type="PROSITE-ProRule" id="PRU01387"/>
    </source>
</evidence>
<evidence type="ECO:0000269" key="2">
    <source>
    </source>
</evidence>
<evidence type="ECO:0000269" key="3">
    <source>
    </source>
</evidence>
<evidence type="ECO:0000269" key="4">
    <source>
    </source>
</evidence>
<evidence type="ECO:0000269" key="5">
    <source>
    </source>
</evidence>
<evidence type="ECO:0000269" key="6">
    <source>
    </source>
</evidence>
<evidence type="ECO:0000269" key="7">
    <source>
    </source>
</evidence>
<evidence type="ECO:0000269" key="8">
    <source>
    </source>
</evidence>
<evidence type="ECO:0000269" key="9">
    <source ref="10"/>
</evidence>
<evidence type="ECO:0000269" key="10">
    <source ref="11"/>
</evidence>
<evidence type="ECO:0000305" key="11"/>
<evidence type="ECO:0000312" key="12">
    <source>
        <dbReference type="PDB" id="4MXW"/>
    </source>
</evidence>
<evidence type="ECO:0007744" key="13">
    <source>
        <dbReference type="PDB" id="4MXV"/>
    </source>
</evidence>
<evidence type="ECO:0007829" key="14">
    <source>
        <dbReference type="PDB" id="1TNR"/>
    </source>
</evidence>
<evidence type="ECO:0007829" key="15">
    <source>
        <dbReference type="PDB" id="4MXV"/>
    </source>
</evidence>
<comment type="function">
    <text evidence="7 8">Cytokine that in its homotrimeric form binds to TNFRSF1A/TNFR1, TNFRSF1B/TNFBR and TNFRSF14/HVEM (PubMed:9462508). In its heterotrimeric form with LTB binds to TNFRSF3/LTBR (PubMed:24248355). Lymphotoxin is produced by lymphocytes and is cytotoxic for a wide range of tumor cells in vitro and in vivo.</text>
</comment>
<comment type="subunit">
    <text evidence="7 8">Homotrimer, and heterotrimer of either two LTB and one LTA subunits or (less prevalent) two LTA and one LTB subunits (PubMed:24248355, PubMed:9462508). Interacts with TNFRSF14 (PubMed:9462508).</text>
</comment>
<comment type="interaction">
    <interactant intactId="EBI-524105">
        <id>P01374</id>
    </interactant>
    <interactant intactId="EBI-348517">
        <id>O95870</id>
        <label>ABHD16A</label>
    </interactant>
    <organismsDiffer>false</organismsDiffer>
    <experiments>3</experiments>
</comment>
<comment type="interaction">
    <interactant intactId="EBI-524105">
        <id>P01374</id>
    </interactant>
    <interactant intactId="EBI-2838246">
        <id>Q6AI12</id>
        <label>ANKRD40</label>
    </interactant>
    <organismsDiffer>false</organismsDiffer>
    <experiments>3</experiments>
</comment>
<comment type="interaction">
    <interactant intactId="EBI-524105">
        <id>P01374</id>
    </interactant>
    <interactant intactId="EBI-12092171">
        <id>Q12797-6</id>
        <label>ASPH</label>
    </interactant>
    <organismsDiffer>false</organismsDiffer>
    <experiments>3</experiments>
</comment>
<comment type="interaction">
    <interactant intactId="EBI-524105">
        <id>P01374</id>
    </interactant>
    <interactant intactId="EBI-8644112">
        <id>Q9BRI3</id>
        <label>SLC30A2</label>
    </interactant>
    <organismsDiffer>false</organismsDiffer>
    <experiments>5</experiments>
</comment>
<comment type="interaction">
    <interactant intactId="EBI-524105">
        <id>P01374</id>
    </interactant>
    <interactant intactId="EBI-10982110">
        <id>Q96Q45-2</id>
        <label>TMEM237</label>
    </interactant>
    <organismsDiffer>false</organismsDiffer>
    <experiments>3</experiments>
</comment>
<comment type="subcellular location">
    <subcellularLocation>
        <location>Secreted</location>
    </subcellularLocation>
    <subcellularLocation>
        <location>Membrane</location>
    </subcellularLocation>
    <text>The homotrimer is secreted. The heterotrimer is membrane-associated.</text>
</comment>
<comment type="polymorphism">
    <text>A polymorphism in LTA accounts, in part, for susceptibility to leprosy linked to chromosome 6p21.3 (LPRS4) [MIM:610988].</text>
</comment>
<comment type="disease" evidence="2">
    <disease id="DI-02697">
        <name>Psoriatic arthritis</name>
        <acronym>PSORAS</acronym>
        <description>An inflammatory, seronegative arthritis associated with psoriasis. It is a heterogeneous disorder ranging from a mild, non-destructive disease to a severe, progressive, erosive arthropathy. Five types of psoriatic arthritis have been defined: asymmetrical oligoarthritis characterized by primary involvement of the small joints of the fingers or toes; asymmetrical arthritis which involves the joints of the extremities; symmetrical polyarthritis characterized by a rheumatoid like pattern that can involve hands, wrists, ankles, and feet; arthritis mutilans, which is a rare but deforming and destructive condition; arthritis of the sacroiliac joints and spine (psoriatic spondylitis).</description>
        <dbReference type="MIM" id="607507"/>
    </disease>
    <text>Disease susceptibility is associated with variants affecting the gene represented in this entry.</text>
</comment>
<comment type="similarity">
    <text evidence="11">Belongs to the tumor necrosis factor family.</text>
</comment>
<comment type="online information" name="Wikipedia">
    <link uri="https://en.wikipedia.org/wiki/Lymphotoxin"/>
    <text>Lymphotoxin entry</text>
</comment>
<comment type="online information" name="Atlas of Genetics and Cytogenetics in Oncology and Haematology">
    <link uri="https://atlasgeneticsoncology.org/gene/41209/LTA"/>
</comment>
<accession>P01374</accession>
<accession>Q8N4C3</accession>
<accession>Q9UKS8</accession>